<comment type="function">
    <text evidence="1">This protein binds to 23S rRNA in the presence of protein L20.</text>
</comment>
<comment type="subunit">
    <text evidence="1">Part of the 50S ribosomal subunit. Contacts protein L20.</text>
</comment>
<comment type="similarity">
    <text evidence="1">Belongs to the bacterial ribosomal protein bL21 family.</text>
</comment>
<proteinExistence type="inferred from homology"/>
<name>RL21_GEOSM</name>
<accession>C6E8U1</accession>
<feature type="chain" id="PRO_1000214892" description="Large ribosomal subunit protein bL21">
    <location>
        <begin position="1"/>
        <end position="102"/>
    </location>
</feature>
<keyword id="KW-0687">Ribonucleoprotein</keyword>
<keyword id="KW-0689">Ribosomal protein</keyword>
<keyword id="KW-0694">RNA-binding</keyword>
<keyword id="KW-0699">rRNA-binding</keyword>
<dbReference type="EMBL" id="CP001661">
    <property type="protein sequence ID" value="ACT16230.1"/>
    <property type="molecule type" value="Genomic_DNA"/>
</dbReference>
<dbReference type="SMR" id="C6E8U1"/>
<dbReference type="STRING" id="443144.GM21_0145"/>
<dbReference type="KEGG" id="gem:GM21_0145"/>
<dbReference type="eggNOG" id="COG0261">
    <property type="taxonomic scope" value="Bacteria"/>
</dbReference>
<dbReference type="HOGENOM" id="CLU_061463_3_2_7"/>
<dbReference type="OrthoDB" id="9813334at2"/>
<dbReference type="GO" id="GO:0005737">
    <property type="term" value="C:cytoplasm"/>
    <property type="evidence" value="ECO:0007669"/>
    <property type="project" value="UniProtKB-ARBA"/>
</dbReference>
<dbReference type="GO" id="GO:1990904">
    <property type="term" value="C:ribonucleoprotein complex"/>
    <property type="evidence" value="ECO:0007669"/>
    <property type="project" value="UniProtKB-KW"/>
</dbReference>
<dbReference type="GO" id="GO:0005840">
    <property type="term" value="C:ribosome"/>
    <property type="evidence" value="ECO:0007669"/>
    <property type="project" value="UniProtKB-KW"/>
</dbReference>
<dbReference type="GO" id="GO:0019843">
    <property type="term" value="F:rRNA binding"/>
    <property type="evidence" value="ECO:0007669"/>
    <property type="project" value="UniProtKB-UniRule"/>
</dbReference>
<dbReference type="GO" id="GO:0003735">
    <property type="term" value="F:structural constituent of ribosome"/>
    <property type="evidence" value="ECO:0007669"/>
    <property type="project" value="InterPro"/>
</dbReference>
<dbReference type="GO" id="GO:0006412">
    <property type="term" value="P:translation"/>
    <property type="evidence" value="ECO:0007669"/>
    <property type="project" value="UniProtKB-UniRule"/>
</dbReference>
<dbReference type="HAMAP" id="MF_01363">
    <property type="entry name" value="Ribosomal_bL21"/>
    <property type="match status" value="1"/>
</dbReference>
<dbReference type="InterPro" id="IPR028909">
    <property type="entry name" value="bL21-like"/>
</dbReference>
<dbReference type="InterPro" id="IPR036164">
    <property type="entry name" value="bL21-like_sf"/>
</dbReference>
<dbReference type="InterPro" id="IPR001787">
    <property type="entry name" value="Ribosomal_bL21"/>
</dbReference>
<dbReference type="InterPro" id="IPR018258">
    <property type="entry name" value="Ribosomal_bL21_CS"/>
</dbReference>
<dbReference type="NCBIfam" id="TIGR00061">
    <property type="entry name" value="L21"/>
    <property type="match status" value="1"/>
</dbReference>
<dbReference type="PANTHER" id="PTHR21349">
    <property type="entry name" value="50S RIBOSOMAL PROTEIN L21"/>
    <property type="match status" value="1"/>
</dbReference>
<dbReference type="PANTHER" id="PTHR21349:SF0">
    <property type="entry name" value="LARGE RIBOSOMAL SUBUNIT PROTEIN BL21M"/>
    <property type="match status" value="1"/>
</dbReference>
<dbReference type="Pfam" id="PF00829">
    <property type="entry name" value="Ribosomal_L21p"/>
    <property type="match status" value="1"/>
</dbReference>
<dbReference type="SUPFAM" id="SSF141091">
    <property type="entry name" value="L21p-like"/>
    <property type="match status" value="1"/>
</dbReference>
<dbReference type="PROSITE" id="PS01169">
    <property type="entry name" value="RIBOSOMAL_L21"/>
    <property type="match status" value="1"/>
</dbReference>
<protein>
    <recommendedName>
        <fullName evidence="1">Large ribosomal subunit protein bL21</fullName>
    </recommendedName>
    <alternativeName>
        <fullName evidence="2">50S ribosomal protein L21</fullName>
    </alternativeName>
</protein>
<reference key="1">
    <citation type="submission" date="2009-07" db="EMBL/GenBank/DDBJ databases">
        <title>Complete sequence of Geobacter sp. M21.</title>
        <authorList>
            <consortium name="US DOE Joint Genome Institute"/>
            <person name="Lucas S."/>
            <person name="Copeland A."/>
            <person name="Lapidus A."/>
            <person name="Glavina del Rio T."/>
            <person name="Dalin E."/>
            <person name="Tice H."/>
            <person name="Bruce D."/>
            <person name="Goodwin L."/>
            <person name="Pitluck S."/>
            <person name="Saunders E."/>
            <person name="Brettin T."/>
            <person name="Detter J.C."/>
            <person name="Han C."/>
            <person name="Larimer F."/>
            <person name="Land M."/>
            <person name="Hauser L."/>
            <person name="Kyrpides N."/>
            <person name="Ovchinnikova G."/>
            <person name="Lovley D."/>
        </authorList>
    </citation>
    <scope>NUCLEOTIDE SEQUENCE [LARGE SCALE GENOMIC DNA]</scope>
    <source>
        <strain>M21</strain>
    </source>
</reference>
<evidence type="ECO:0000255" key="1">
    <source>
        <dbReference type="HAMAP-Rule" id="MF_01363"/>
    </source>
</evidence>
<evidence type="ECO:0000305" key="2"/>
<organism>
    <name type="scientific">Geobacter sp. (strain M21)</name>
    <dbReference type="NCBI Taxonomy" id="443144"/>
    <lineage>
        <taxon>Bacteria</taxon>
        <taxon>Pseudomonadati</taxon>
        <taxon>Thermodesulfobacteriota</taxon>
        <taxon>Desulfuromonadia</taxon>
        <taxon>Geobacterales</taxon>
        <taxon>Geobacteraceae</taxon>
        <taxon>Geobacter</taxon>
    </lineage>
</organism>
<sequence>MYAVVKTGGKQYKVSEGDFLKVEKLEGAVGDTVEFSEILMVGGDKVVIGTPLVPSASVVGKIVEQGKDKKILVFKSKRRKNTRKLNGHRQLRTILMIEKINA</sequence>
<gene>
    <name evidence="1" type="primary">rplU</name>
    <name type="ordered locus">GM21_0145</name>
</gene>